<keyword id="KW-0150">Chloroplast</keyword>
<keyword id="KW-0934">Plastid</keyword>
<keyword id="KW-1185">Reference proteome</keyword>
<keyword id="KW-0687">Ribonucleoprotein</keyword>
<keyword id="KW-0689">Ribosomal protein</keyword>
<sequence>MLSPKRTRFRKQHRGRMKGKSYRGNCICFGRYALQALEPTWITARQIEAGRRAMTRYARRGGKIWVRIFPDKPVTIRPTETRMGSGKGSPEYWVAVVKPGRILYEMGGVSETVARVAISIAASKMPIRSQFLRLEI</sequence>
<proteinExistence type="inferred from homology"/>
<protein>
    <recommendedName>
        <fullName evidence="1">Large ribosomal subunit protein uL16c</fullName>
    </recommendedName>
    <alternativeName>
        <fullName evidence="2">50S ribosomal protein L16, chloroplastic</fullName>
    </alternativeName>
</protein>
<feature type="chain" id="PRO_0000062299" description="Large ribosomal subunit protein uL16c">
    <location>
        <begin position="1"/>
        <end position="136"/>
    </location>
</feature>
<reference key="1">
    <citation type="journal article" date="2004" name="Gene">
        <title>The complete nucleotide sequence of wild rice (Oryza nivara) chloroplast genome: first genome wide comparative sequence analysis of wild and cultivated rice.</title>
        <authorList>
            <person name="Masood M.S."/>
            <person name="Nishikawa T."/>
            <person name="Fukuoka S."/>
            <person name="Njenga P.K."/>
            <person name="Tsudzuki T."/>
            <person name="Kadowaki K."/>
        </authorList>
    </citation>
    <scope>NUCLEOTIDE SEQUENCE [LARGE SCALE GENOMIC DNA]</scope>
    <source>
        <strain evidence="3">cv. SL10</strain>
    </source>
</reference>
<gene>
    <name evidence="1" type="primary">rpl16</name>
</gene>
<dbReference type="EMBL" id="AP006728">
    <property type="protein sequence ID" value="BAD26816.1"/>
    <property type="molecule type" value="Genomic_DNA"/>
</dbReference>
<dbReference type="RefSeq" id="YP_052787.1">
    <property type="nucleotide sequence ID" value="NC_005973.1"/>
</dbReference>
<dbReference type="SMR" id="Q6END6"/>
<dbReference type="STRING" id="4536.Q6END6"/>
<dbReference type="GeneID" id="2885932"/>
<dbReference type="eggNOG" id="KOG0901">
    <property type="taxonomic scope" value="Eukaryota"/>
</dbReference>
<dbReference type="eggNOG" id="KOG3422">
    <property type="taxonomic scope" value="Eukaryota"/>
</dbReference>
<dbReference type="Proteomes" id="UP000006591">
    <property type="component" value="Chloroplast"/>
</dbReference>
<dbReference type="GO" id="GO:0009507">
    <property type="term" value="C:chloroplast"/>
    <property type="evidence" value="ECO:0007669"/>
    <property type="project" value="UniProtKB-SubCell"/>
</dbReference>
<dbReference type="GO" id="GO:0005762">
    <property type="term" value="C:mitochondrial large ribosomal subunit"/>
    <property type="evidence" value="ECO:0007669"/>
    <property type="project" value="TreeGrafter"/>
</dbReference>
<dbReference type="GO" id="GO:0009536">
    <property type="term" value="C:plastid"/>
    <property type="evidence" value="ECO:0000305"/>
    <property type="project" value="Gramene"/>
</dbReference>
<dbReference type="GO" id="GO:0019843">
    <property type="term" value="F:rRNA binding"/>
    <property type="evidence" value="ECO:0007669"/>
    <property type="project" value="InterPro"/>
</dbReference>
<dbReference type="GO" id="GO:0003735">
    <property type="term" value="F:structural constituent of ribosome"/>
    <property type="evidence" value="ECO:0007669"/>
    <property type="project" value="InterPro"/>
</dbReference>
<dbReference type="GO" id="GO:0032543">
    <property type="term" value="P:mitochondrial translation"/>
    <property type="evidence" value="ECO:0007669"/>
    <property type="project" value="TreeGrafter"/>
</dbReference>
<dbReference type="CDD" id="cd01433">
    <property type="entry name" value="Ribosomal_L16_L10e"/>
    <property type="match status" value="1"/>
</dbReference>
<dbReference type="FunFam" id="3.90.1170.10:FF:000001">
    <property type="entry name" value="50S ribosomal protein L16"/>
    <property type="match status" value="1"/>
</dbReference>
<dbReference type="Gene3D" id="3.90.1170.10">
    <property type="entry name" value="Ribosomal protein L10e/L16"/>
    <property type="match status" value="1"/>
</dbReference>
<dbReference type="HAMAP" id="MF_01342">
    <property type="entry name" value="Ribosomal_uL16"/>
    <property type="match status" value="1"/>
</dbReference>
<dbReference type="InterPro" id="IPR047873">
    <property type="entry name" value="Ribosomal_uL16"/>
</dbReference>
<dbReference type="InterPro" id="IPR000114">
    <property type="entry name" value="Ribosomal_uL16_bact-type"/>
</dbReference>
<dbReference type="InterPro" id="IPR020798">
    <property type="entry name" value="Ribosomal_uL16_CS"/>
</dbReference>
<dbReference type="InterPro" id="IPR016180">
    <property type="entry name" value="Ribosomal_uL16_dom"/>
</dbReference>
<dbReference type="InterPro" id="IPR036920">
    <property type="entry name" value="Ribosomal_uL16_sf"/>
</dbReference>
<dbReference type="NCBIfam" id="TIGR01164">
    <property type="entry name" value="rplP_bact"/>
    <property type="match status" value="1"/>
</dbReference>
<dbReference type="PANTHER" id="PTHR12220">
    <property type="entry name" value="50S/60S RIBOSOMAL PROTEIN L16"/>
    <property type="match status" value="1"/>
</dbReference>
<dbReference type="PANTHER" id="PTHR12220:SF13">
    <property type="entry name" value="LARGE RIBOSOMAL SUBUNIT PROTEIN UL16M"/>
    <property type="match status" value="1"/>
</dbReference>
<dbReference type="Pfam" id="PF00252">
    <property type="entry name" value="Ribosomal_L16"/>
    <property type="match status" value="1"/>
</dbReference>
<dbReference type="PRINTS" id="PR00060">
    <property type="entry name" value="RIBOSOMALL16"/>
</dbReference>
<dbReference type="SUPFAM" id="SSF54686">
    <property type="entry name" value="Ribosomal protein L16p/L10e"/>
    <property type="match status" value="1"/>
</dbReference>
<dbReference type="PROSITE" id="PS00586">
    <property type="entry name" value="RIBOSOMAL_L16_1"/>
    <property type="match status" value="1"/>
</dbReference>
<dbReference type="PROSITE" id="PS00701">
    <property type="entry name" value="RIBOSOMAL_L16_2"/>
    <property type="match status" value="1"/>
</dbReference>
<geneLocation type="chloroplast"/>
<accession>Q6END6</accession>
<comment type="subunit">
    <text evidence="1">Part of the 50S ribosomal subunit.</text>
</comment>
<comment type="subcellular location">
    <subcellularLocation>
        <location>Plastid</location>
        <location>Chloroplast</location>
    </subcellularLocation>
</comment>
<comment type="similarity">
    <text evidence="1">Belongs to the universal ribosomal protein uL16 family.</text>
</comment>
<name>RK16_ORYNI</name>
<evidence type="ECO:0000255" key="1">
    <source>
        <dbReference type="HAMAP-Rule" id="MF_01342"/>
    </source>
</evidence>
<evidence type="ECO:0000305" key="2"/>
<evidence type="ECO:0000312" key="3">
    <source>
        <dbReference type="Proteomes" id="UP000006591"/>
    </source>
</evidence>
<organism>
    <name type="scientific">Oryza nivara</name>
    <name type="common">Indian wild rice</name>
    <name type="synonym">Oryza sativa f. spontanea</name>
    <dbReference type="NCBI Taxonomy" id="4536"/>
    <lineage>
        <taxon>Eukaryota</taxon>
        <taxon>Viridiplantae</taxon>
        <taxon>Streptophyta</taxon>
        <taxon>Embryophyta</taxon>
        <taxon>Tracheophyta</taxon>
        <taxon>Spermatophyta</taxon>
        <taxon>Magnoliopsida</taxon>
        <taxon>Liliopsida</taxon>
        <taxon>Poales</taxon>
        <taxon>Poaceae</taxon>
        <taxon>BOP clade</taxon>
        <taxon>Oryzoideae</taxon>
        <taxon>Oryzeae</taxon>
        <taxon>Oryzinae</taxon>
        <taxon>Oryza</taxon>
    </lineage>
</organism>